<comment type="subcellular location">
    <subcellularLocation>
        <location evidence="1">Secreted</location>
    </subcellularLocation>
</comment>
<comment type="tissue specificity">
    <text>Expressed by the venom duct.</text>
</comment>
<comment type="domain">
    <text evidence="1">The presence of a 'disulfide through disulfide knot' structurally defines this protein as a knottin.</text>
</comment>
<comment type="domain">
    <text>The cysteine framework is VI/VII (C-C-CC-C-C).</text>
</comment>
<comment type="similarity">
    <text evidence="3">Belongs to the conotoxin O1 superfamily.</text>
</comment>
<protein>
    <recommendedName>
        <fullName>Conotoxin VnMKLT1-021</fullName>
    </recommendedName>
</protein>
<evidence type="ECO:0000250" key="1"/>
<evidence type="ECO:0000255" key="2"/>
<evidence type="ECO:0000305" key="3"/>
<sequence length="91" mass="10156">MKLTCVMIVAVLFLTAWTFVTADDPRDGPDTAVGWRKLFSEARDEMKNREASKLNERGCIEDKKYCGILPFANSGVCCSYLCIFVCVPKAP</sequence>
<proteinExistence type="evidence at transcript level"/>
<reference key="1">
    <citation type="journal article" date="2001" name="Mol. Biol. Evol.">
        <title>Mechanisms for evolving hypervariability: the case of conopeptides.</title>
        <authorList>
            <person name="Conticello S.G."/>
            <person name="Gilad Y."/>
            <person name="Avidan N."/>
            <person name="Ben-Asher E."/>
            <person name="Levy Z."/>
            <person name="Fainzilber M."/>
        </authorList>
    </citation>
    <scope>NUCLEOTIDE SEQUENCE [MRNA]</scope>
    <source>
        <tissue>Venom duct</tissue>
    </source>
</reference>
<keyword id="KW-1015">Disulfide bond</keyword>
<keyword id="KW-0960">Knottin</keyword>
<keyword id="KW-0528">Neurotoxin</keyword>
<keyword id="KW-0964">Secreted</keyword>
<keyword id="KW-0732">Signal</keyword>
<keyword id="KW-0800">Toxin</keyword>
<feature type="signal peptide" evidence="2">
    <location>
        <begin position="1"/>
        <end position="22"/>
    </location>
</feature>
<feature type="propeptide" id="PRO_0000404726" evidence="1">
    <location>
        <begin position="23"/>
        <end position="57"/>
    </location>
</feature>
<feature type="peptide" id="PRO_0000404727" description="Conotoxin VnMKLT1-021">
    <location>
        <begin position="58"/>
        <end position="91"/>
    </location>
</feature>
<feature type="disulfide bond" evidence="1">
    <location>
        <begin position="59"/>
        <end position="78"/>
    </location>
</feature>
<feature type="disulfide bond" evidence="1">
    <location>
        <begin position="66"/>
        <end position="82"/>
    </location>
</feature>
<feature type="disulfide bond" evidence="1">
    <location>
        <begin position="77"/>
        <end position="86"/>
    </location>
</feature>
<dbReference type="EMBL" id="AF215036">
    <property type="protein sequence ID" value="AAG60464.1"/>
    <property type="molecule type" value="mRNA"/>
</dbReference>
<dbReference type="ConoServer" id="723">
    <property type="toxin name" value="Vn6.12 precursor"/>
</dbReference>
<dbReference type="GO" id="GO:0005576">
    <property type="term" value="C:extracellular region"/>
    <property type="evidence" value="ECO:0007669"/>
    <property type="project" value="UniProtKB-SubCell"/>
</dbReference>
<dbReference type="GO" id="GO:0008200">
    <property type="term" value="F:ion channel inhibitor activity"/>
    <property type="evidence" value="ECO:0007669"/>
    <property type="project" value="InterPro"/>
</dbReference>
<dbReference type="GO" id="GO:0090729">
    <property type="term" value="F:toxin activity"/>
    <property type="evidence" value="ECO:0007669"/>
    <property type="project" value="UniProtKB-KW"/>
</dbReference>
<dbReference type="InterPro" id="IPR004214">
    <property type="entry name" value="Conotoxin"/>
</dbReference>
<dbReference type="Pfam" id="PF02950">
    <property type="entry name" value="Conotoxin"/>
    <property type="match status" value="1"/>
</dbReference>
<dbReference type="SUPFAM" id="SSF57059">
    <property type="entry name" value="omega toxin-like"/>
    <property type="match status" value="1"/>
</dbReference>
<name>O1612_CONVE</name>
<accession>Q9BPA1</accession>
<organism>
    <name type="scientific">Conus ventricosus</name>
    <name type="common">Mediterranean cone</name>
    <dbReference type="NCBI Taxonomy" id="117992"/>
    <lineage>
        <taxon>Eukaryota</taxon>
        <taxon>Metazoa</taxon>
        <taxon>Spiralia</taxon>
        <taxon>Lophotrochozoa</taxon>
        <taxon>Mollusca</taxon>
        <taxon>Gastropoda</taxon>
        <taxon>Caenogastropoda</taxon>
        <taxon>Neogastropoda</taxon>
        <taxon>Conoidea</taxon>
        <taxon>Conidae</taxon>
        <taxon>Conus</taxon>
        <taxon>Lautoconus</taxon>
    </lineage>
</organism>